<dbReference type="EMBL" id="Z68111">
    <property type="status" value="NOT_ANNOTATED_CDS"/>
    <property type="molecule type" value="Genomic_DNA"/>
</dbReference>
<dbReference type="EMBL" id="Z71255">
    <property type="status" value="NOT_ANNOTATED_CDS"/>
    <property type="molecule type" value="Genomic_DNA"/>
</dbReference>
<dbReference type="EMBL" id="BK006949">
    <property type="protein sequence ID" value="DAD54812.1"/>
    <property type="molecule type" value="Genomic_DNA"/>
</dbReference>
<dbReference type="EMBL" id="AY693322">
    <property type="protein sequence ID" value="AAT93341.1"/>
    <property type="molecule type" value="Genomic_DNA"/>
</dbReference>
<dbReference type="RefSeq" id="NP_001381971.1">
    <property type="nucleotide sequence ID" value="NM_001395041.1"/>
</dbReference>
<dbReference type="FunCoup" id="Q6B0V8">
    <property type="interactions" value="27"/>
</dbReference>
<dbReference type="IntAct" id="Q6B0V8">
    <property type="interactions" value="1"/>
</dbReference>
<dbReference type="PaxDb" id="4932-YPR038W"/>
<dbReference type="EnsemblFungi" id="YPR038W_mRNA">
    <property type="protein sequence ID" value="YPR038W"/>
    <property type="gene ID" value="YPR038W"/>
</dbReference>
<dbReference type="GeneID" id="856150"/>
<dbReference type="AGR" id="SGD:S000006242"/>
<dbReference type="SGD" id="S000006242">
    <property type="gene designation" value="IRC16"/>
</dbReference>
<dbReference type="HOGENOM" id="CLU_2063316_0_0_1"/>
<dbReference type="PRO" id="PR:Q6B0V8"/>
<dbReference type="Proteomes" id="UP000002311">
    <property type="component" value="Chromosome XVI"/>
</dbReference>
<dbReference type="GO" id="GO:0016020">
    <property type="term" value="C:membrane"/>
    <property type="evidence" value="ECO:0007669"/>
    <property type="project" value="UniProtKB-SubCell"/>
</dbReference>
<dbReference type="GO" id="GO:0006312">
    <property type="term" value="P:mitotic recombination"/>
    <property type="evidence" value="ECO:0000315"/>
    <property type="project" value="SGD"/>
</dbReference>
<feature type="chain" id="PRO_0000299816" description="Uncharacterized protein IRC16">
    <location>
        <begin position="1"/>
        <end position="119"/>
    </location>
</feature>
<feature type="transmembrane region" description="Helical" evidence="1">
    <location>
        <begin position="53"/>
        <end position="73"/>
    </location>
</feature>
<feature type="transmembrane region" description="Helical" evidence="1">
    <location>
        <begin position="92"/>
        <end position="112"/>
    </location>
</feature>
<proteinExistence type="inferred from homology"/>
<accession>Q6B0V8</accession>
<accession>A0A8D9PCP4</accession>
<reference key="1">
    <citation type="journal article" date="1997" name="Nature">
        <title>The nucleotide sequence of Saccharomyces cerevisiae chromosome XVI.</title>
        <authorList>
            <person name="Bussey H."/>
            <person name="Storms R.K."/>
            <person name="Ahmed A."/>
            <person name="Albermann K."/>
            <person name="Allen E."/>
            <person name="Ansorge W."/>
            <person name="Araujo R."/>
            <person name="Aparicio A."/>
            <person name="Barrell B.G."/>
            <person name="Badcock K."/>
            <person name="Benes V."/>
            <person name="Botstein D."/>
            <person name="Bowman S."/>
            <person name="Brueckner M."/>
            <person name="Carpenter J."/>
            <person name="Cherry J.M."/>
            <person name="Chung E."/>
            <person name="Churcher C.M."/>
            <person name="Coster F."/>
            <person name="Davis K."/>
            <person name="Davis R.W."/>
            <person name="Dietrich F.S."/>
            <person name="Delius H."/>
            <person name="DiPaolo T."/>
            <person name="Dubois E."/>
            <person name="Duesterhoeft A."/>
            <person name="Duncan M."/>
            <person name="Floeth M."/>
            <person name="Fortin N."/>
            <person name="Friesen J.D."/>
            <person name="Fritz C."/>
            <person name="Goffeau A."/>
            <person name="Hall J."/>
            <person name="Hebling U."/>
            <person name="Heumann K."/>
            <person name="Hilbert H."/>
            <person name="Hillier L.W."/>
            <person name="Hunicke-Smith S."/>
            <person name="Hyman R.W."/>
            <person name="Johnston M."/>
            <person name="Kalman S."/>
            <person name="Kleine K."/>
            <person name="Komp C."/>
            <person name="Kurdi O."/>
            <person name="Lashkari D."/>
            <person name="Lew H."/>
            <person name="Lin A."/>
            <person name="Lin D."/>
            <person name="Louis E.J."/>
            <person name="Marathe R."/>
            <person name="Messenguy F."/>
            <person name="Mewes H.-W."/>
            <person name="Mirtipati S."/>
            <person name="Moestl D."/>
            <person name="Mueller-Auer S."/>
            <person name="Namath A."/>
            <person name="Nentwich U."/>
            <person name="Oefner P."/>
            <person name="Pearson D."/>
            <person name="Petel F.X."/>
            <person name="Pohl T.M."/>
            <person name="Purnelle B."/>
            <person name="Rajandream M.A."/>
            <person name="Rechmann S."/>
            <person name="Rieger M."/>
            <person name="Riles L."/>
            <person name="Roberts D."/>
            <person name="Schaefer M."/>
            <person name="Scharfe M."/>
            <person name="Scherens B."/>
            <person name="Schramm S."/>
            <person name="Schroeder M."/>
            <person name="Sdicu A.-M."/>
            <person name="Tettelin H."/>
            <person name="Urrestarazu L.A."/>
            <person name="Ushinsky S."/>
            <person name="Vierendeels F."/>
            <person name="Vissers S."/>
            <person name="Voss H."/>
            <person name="Walsh S.V."/>
            <person name="Wambutt R."/>
            <person name="Wang Y."/>
            <person name="Wedler E."/>
            <person name="Wedler H."/>
            <person name="Winnett E."/>
            <person name="Zhong W.-W."/>
            <person name="Zollner A."/>
            <person name="Vo D.H."/>
            <person name="Hani J."/>
        </authorList>
    </citation>
    <scope>NUCLEOTIDE SEQUENCE [LARGE SCALE GENOMIC DNA]</scope>
    <source>
        <strain>ATCC 204508 / S288c</strain>
    </source>
</reference>
<reference key="2">
    <citation type="journal article" date="2014" name="G3 (Bethesda)">
        <title>The reference genome sequence of Saccharomyces cerevisiae: Then and now.</title>
        <authorList>
            <person name="Engel S.R."/>
            <person name="Dietrich F.S."/>
            <person name="Fisk D.G."/>
            <person name="Binkley G."/>
            <person name="Balakrishnan R."/>
            <person name="Costanzo M.C."/>
            <person name="Dwight S.S."/>
            <person name="Hitz B.C."/>
            <person name="Karra K."/>
            <person name="Nash R.S."/>
            <person name="Weng S."/>
            <person name="Wong E.D."/>
            <person name="Lloyd P."/>
            <person name="Skrzypek M.S."/>
            <person name="Miyasato S.R."/>
            <person name="Simison M."/>
            <person name="Cherry J.M."/>
        </authorList>
    </citation>
    <scope>GENOME REANNOTATION</scope>
    <source>
        <strain>ATCC 204508 / S288c</strain>
    </source>
</reference>
<reference key="3">
    <citation type="journal article" date="2007" name="Genome Res.">
        <title>Approaching a complete repository of sequence-verified protein-encoding clones for Saccharomyces cerevisiae.</title>
        <authorList>
            <person name="Hu Y."/>
            <person name="Rolfs A."/>
            <person name="Bhullar B."/>
            <person name="Murthy T.V.S."/>
            <person name="Zhu C."/>
            <person name="Berger M.F."/>
            <person name="Camargo A.A."/>
            <person name="Kelley F."/>
            <person name="McCarron S."/>
            <person name="Jepson D."/>
            <person name="Richardson A."/>
            <person name="Raphael J."/>
            <person name="Moreira D."/>
            <person name="Taycher E."/>
            <person name="Zuo D."/>
            <person name="Mohr S."/>
            <person name="Kane M.F."/>
            <person name="Williamson J."/>
            <person name="Simpson A.J.G."/>
            <person name="Bulyk M.L."/>
            <person name="Harlow E."/>
            <person name="Marsischky G."/>
            <person name="Kolodner R.D."/>
            <person name="LaBaer J."/>
        </authorList>
    </citation>
    <scope>NUCLEOTIDE SEQUENCE [GENOMIC DNA]</scope>
    <source>
        <strain>ATCC 204508 / S288c</strain>
    </source>
</reference>
<reference key="4">
    <citation type="journal article" date="2007" name="PLoS Genet.">
        <title>Genome-wide analysis of Rad52 foci reveals diverse mechanisms impacting recombination.</title>
        <authorList>
            <person name="Alvaro D."/>
            <person name="Lisby M."/>
            <person name="Rothstein R."/>
        </authorList>
    </citation>
    <scope>DISRUPTION PHENOTYPE</scope>
</reference>
<comment type="subcellular location">
    <subcellularLocation>
        <location evidence="1">Membrane</location>
        <topology evidence="1">Multi-pass membrane protein</topology>
    </subcellularLocation>
</comment>
<comment type="disruption phenotype">
    <text evidence="2">Displays increased levels of spontaneous RAD52 foci in proliferating diploid cells.</text>
</comment>
<comment type="miscellaneous">
    <text evidence="4">Partially overlaps ERV2 and YPR039W. Disruption phenotypes caused by deletion of this gene may also be a result of a defect in its overlapping gene.</text>
</comment>
<organism>
    <name type="scientific">Saccharomyces cerevisiae (strain ATCC 204508 / S288c)</name>
    <name type="common">Baker's yeast</name>
    <dbReference type="NCBI Taxonomy" id="559292"/>
    <lineage>
        <taxon>Eukaryota</taxon>
        <taxon>Fungi</taxon>
        <taxon>Dikarya</taxon>
        <taxon>Ascomycota</taxon>
        <taxon>Saccharomycotina</taxon>
        <taxon>Saccharomycetes</taxon>
        <taxon>Saccharomycetales</taxon>
        <taxon>Saccharomycetaceae</taxon>
        <taxon>Saccharomyces</taxon>
    </lineage>
</organism>
<keyword id="KW-0472">Membrane</keyword>
<keyword id="KW-1185">Reference proteome</keyword>
<keyword id="KW-0812">Transmembrane</keyword>
<keyword id="KW-1133">Transmembrane helix</keyword>
<name>IRC16_YEAST</name>
<protein>
    <recommendedName>
        <fullName evidence="4">Uncharacterized protein IRC16</fullName>
    </recommendedName>
    <alternativeName>
        <fullName evidence="3">Increased recombination centers protein 16</fullName>
    </alternativeName>
</protein>
<evidence type="ECO:0000255" key="1"/>
<evidence type="ECO:0000269" key="2">
    <source>
    </source>
</evidence>
<evidence type="ECO:0000303" key="3">
    <source>
    </source>
</evidence>
<evidence type="ECO:0000305" key="4"/>
<evidence type="ECO:0000312" key="5">
    <source>
        <dbReference type="SGD" id="S000006242"/>
    </source>
</evidence>
<sequence length="119" mass="13451">MVCFSISFNRASFFSAAAPCTSSIPDFALIRPGVAMDSSLDEKNIHRPMIPNAATILMAWLLLTICFIPSFLAQSVQTFLFTNHQPSRLLVFITHVYCLMIKPFVLYFWFLFPLRLPGG</sequence>
<gene>
    <name evidence="3" type="primary">IRC16</name>
    <name evidence="5" type="ordered locus">YPR038W</name>
</gene>